<name>RIBB_SHEB2</name>
<comment type="function">
    <text evidence="1">Catalyzes the conversion of D-ribulose 5-phosphate to formate and 3,4-dihydroxy-2-butanone 4-phosphate.</text>
</comment>
<comment type="catalytic activity">
    <reaction evidence="1">
        <text>D-ribulose 5-phosphate = (2S)-2-hydroxy-3-oxobutyl phosphate + formate + H(+)</text>
        <dbReference type="Rhea" id="RHEA:18457"/>
        <dbReference type="ChEBI" id="CHEBI:15378"/>
        <dbReference type="ChEBI" id="CHEBI:15740"/>
        <dbReference type="ChEBI" id="CHEBI:58121"/>
        <dbReference type="ChEBI" id="CHEBI:58830"/>
        <dbReference type="EC" id="4.1.99.12"/>
    </reaction>
</comment>
<comment type="cofactor">
    <cofactor evidence="1">
        <name>Mg(2+)</name>
        <dbReference type="ChEBI" id="CHEBI:18420"/>
    </cofactor>
    <cofactor evidence="1">
        <name>Mn(2+)</name>
        <dbReference type="ChEBI" id="CHEBI:29035"/>
    </cofactor>
    <text evidence="1">Binds 2 divalent metal cations per subunit. Magnesium or manganese.</text>
</comment>
<comment type="pathway">
    <text evidence="1">Cofactor biosynthesis; riboflavin biosynthesis; 2-hydroxy-3-oxobutyl phosphate from D-ribulose 5-phosphate: step 1/1.</text>
</comment>
<comment type="subunit">
    <text evidence="1">Homodimer.</text>
</comment>
<comment type="similarity">
    <text evidence="1">Belongs to the DHBP synthase family.</text>
</comment>
<organism>
    <name type="scientific">Shewanella baltica (strain OS223)</name>
    <dbReference type="NCBI Taxonomy" id="407976"/>
    <lineage>
        <taxon>Bacteria</taxon>
        <taxon>Pseudomonadati</taxon>
        <taxon>Pseudomonadota</taxon>
        <taxon>Gammaproteobacteria</taxon>
        <taxon>Alteromonadales</taxon>
        <taxon>Shewanellaceae</taxon>
        <taxon>Shewanella</taxon>
    </lineage>
</organism>
<feature type="chain" id="PRO_1000193759" description="3,4-dihydroxy-2-butanone 4-phosphate synthase">
    <location>
        <begin position="1"/>
        <end position="217"/>
    </location>
</feature>
<feature type="binding site" evidence="1">
    <location>
        <begin position="37"/>
        <end position="38"/>
    </location>
    <ligand>
        <name>D-ribulose 5-phosphate</name>
        <dbReference type="ChEBI" id="CHEBI:58121"/>
    </ligand>
</feature>
<feature type="binding site" evidence="1">
    <location>
        <position position="38"/>
    </location>
    <ligand>
        <name>Mg(2+)</name>
        <dbReference type="ChEBI" id="CHEBI:18420"/>
        <label>1</label>
    </ligand>
</feature>
<feature type="binding site" evidence="1">
    <location>
        <position position="38"/>
    </location>
    <ligand>
        <name>Mg(2+)</name>
        <dbReference type="ChEBI" id="CHEBI:18420"/>
        <label>2</label>
    </ligand>
</feature>
<feature type="binding site" evidence="1">
    <location>
        <position position="42"/>
    </location>
    <ligand>
        <name>D-ribulose 5-phosphate</name>
        <dbReference type="ChEBI" id="CHEBI:58121"/>
    </ligand>
</feature>
<feature type="binding site" evidence="1">
    <location>
        <begin position="150"/>
        <end position="154"/>
    </location>
    <ligand>
        <name>D-ribulose 5-phosphate</name>
        <dbReference type="ChEBI" id="CHEBI:58121"/>
    </ligand>
</feature>
<feature type="binding site" evidence="1">
    <location>
        <position position="153"/>
    </location>
    <ligand>
        <name>Mg(2+)</name>
        <dbReference type="ChEBI" id="CHEBI:18420"/>
        <label>2</label>
    </ligand>
</feature>
<feature type="binding site" evidence="1">
    <location>
        <position position="174"/>
    </location>
    <ligand>
        <name>D-ribulose 5-phosphate</name>
        <dbReference type="ChEBI" id="CHEBI:58121"/>
    </ligand>
</feature>
<feature type="site" description="Essential for catalytic activity" evidence="1">
    <location>
        <position position="136"/>
    </location>
</feature>
<feature type="site" description="Essential for catalytic activity" evidence="1">
    <location>
        <position position="174"/>
    </location>
</feature>
<gene>
    <name evidence="1" type="primary">ribB</name>
    <name type="ordered locus">Sbal223_0138</name>
</gene>
<sequence length="217" mass="22942">MNQSLLAPFGTAIERVEAGLNALRQGQGVLVVDDEDRENEGDLIFAAETLTNAQMAMLIRECSGIVCLCLPDEKVKALELPAMVEHNSSQYGTAFTVSIEATVGVTTGVSAADRVTTIKAAIADNAKPSDLARPGHVYPLRAQPGGVLTRRGHTEGTIDLVQLAGLKPAGVLCEVTNPDGTMARLPEIIAFGALHNMPVLTIEDIVVYRKSLLAKVG</sequence>
<keyword id="KW-0456">Lyase</keyword>
<keyword id="KW-0460">Magnesium</keyword>
<keyword id="KW-0464">Manganese</keyword>
<keyword id="KW-0479">Metal-binding</keyword>
<keyword id="KW-0686">Riboflavin biosynthesis</keyword>
<proteinExistence type="inferred from homology"/>
<reference key="1">
    <citation type="submission" date="2008-12" db="EMBL/GenBank/DDBJ databases">
        <title>Complete sequence of chromosome of Shewanella baltica OS223.</title>
        <authorList>
            <consortium name="US DOE Joint Genome Institute"/>
            <person name="Lucas S."/>
            <person name="Copeland A."/>
            <person name="Lapidus A."/>
            <person name="Glavina del Rio T."/>
            <person name="Dalin E."/>
            <person name="Tice H."/>
            <person name="Bruce D."/>
            <person name="Goodwin L."/>
            <person name="Pitluck S."/>
            <person name="Chertkov O."/>
            <person name="Meincke L."/>
            <person name="Brettin T."/>
            <person name="Detter J.C."/>
            <person name="Han C."/>
            <person name="Kuske C.R."/>
            <person name="Larimer F."/>
            <person name="Land M."/>
            <person name="Hauser L."/>
            <person name="Kyrpides N."/>
            <person name="Ovchinnikova G."/>
            <person name="Brettar I."/>
            <person name="Rodrigues J."/>
            <person name="Konstantinidis K."/>
            <person name="Tiedje J."/>
        </authorList>
    </citation>
    <scope>NUCLEOTIDE SEQUENCE [LARGE SCALE GENOMIC DNA]</scope>
    <source>
        <strain>OS223</strain>
    </source>
</reference>
<accession>B8E3W7</accession>
<dbReference type="EC" id="4.1.99.12" evidence="1"/>
<dbReference type="EMBL" id="CP001252">
    <property type="protein sequence ID" value="ACK44679.1"/>
    <property type="molecule type" value="Genomic_DNA"/>
</dbReference>
<dbReference type="RefSeq" id="WP_006083662.1">
    <property type="nucleotide sequence ID" value="NC_011663.1"/>
</dbReference>
<dbReference type="SMR" id="B8E3W7"/>
<dbReference type="GeneID" id="11770498"/>
<dbReference type="KEGG" id="sbp:Sbal223_0138"/>
<dbReference type="HOGENOM" id="CLU_020273_3_0_6"/>
<dbReference type="UniPathway" id="UPA00275">
    <property type="reaction ID" value="UER00399"/>
</dbReference>
<dbReference type="Proteomes" id="UP000002507">
    <property type="component" value="Chromosome"/>
</dbReference>
<dbReference type="GO" id="GO:0005829">
    <property type="term" value="C:cytosol"/>
    <property type="evidence" value="ECO:0007669"/>
    <property type="project" value="TreeGrafter"/>
</dbReference>
<dbReference type="GO" id="GO:0008686">
    <property type="term" value="F:3,4-dihydroxy-2-butanone-4-phosphate synthase activity"/>
    <property type="evidence" value="ECO:0007669"/>
    <property type="project" value="UniProtKB-UniRule"/>
</dbReference>
<dbReference type="GO" id="GO:0000287">
    <property type="term" value="F:magnesium ion binding"/>
    <property type="evidence" value="ECO:0007669"/>
    <property type="project" value="UniProtKB-UniRule"/>
</dbReference>
<dbReference type="GO" id="GO:0030145">
    <property type="term" value="F:manganese ion binding"/>
    <property type="evidence" value="ECO:0007669"/>
    <property type="project" value="UniProtKB-UniRule"/>
</dbReference>
<dbReference type="GO" id="GO:0009231">
    <property type="term" value="P:riboflavin biosynthetic process"/>
    <property type="evidence" value="ECO:0007669"/>
    <property type="project" value="UniProtKB-UniRule"/>
</dbReference>
<dbReference type="FunFam" id="3.90.870.10:FF:000002">
    <property type="entry name" value="3,4-dihydroxy-2-butanone 4-phosphate synthase"/>
    <property type="match status" value="1"/>
</dbReference>
<dbReference type="Gene3D" id="3.90.870.10">
    <property type="entry name" value="DHBP synthase"/>
    <property type="match status" value="1"/>
</dbReference>
<dbReference type="HAMAP" id="MF_00180">
    <property type="entry name" value="RibB"/>
    <property type="match status" value="1"/>
</dbReference>
<dbReference type="InterPro" id="IPR017945">
    <property type="entry name" value="DHBP_synth_RibB-like_a/b_dom"/>
</dbReference>
<dbReference type="InterPro" id="IPR000422">
    <property type="entry name" value="DHBP_synthase_RibB"/>
</dbReference>
<dbReference type="NCBIfam" id="TIGR00506">
    <property type="entry name" value="ribB"/>
    <property type="match status" value="1"/>
</dbReference>
<dbReference type="PANTHER" id="PTHR21327:SF38">
    <property type="entry name" value="3,4-DIHYDROXY-2-BUTANONE 4-PHOSPHATE SYNTHASE"/>
    <property type="match status" value="1"/>
</dbReference>
<dbReference type="PANTHER" id="PTHR21327">
    <property type="entry name" value="GTP CYCLOHYDROLASE II-RELATED"/>
    <property type="match status" value="1"/>
</dbReference>
<dbReference type="Pfam" id="PF00926">
    <property type="entry name" value="DHBP_synthase"/>
    <property type="match status" value="1"/>
</dbReference>
<dbReference type="SUPFAM" id="SSF55821">
    <property type="entry name" value="YrdC/RibB"/>
    <property type="match status" value="1"/>
</dbReference>
<protein>
    <recommendedName>
        <fullName evidence="1">3,4-dihydroxy-2-butanone 4-phosphate synthase</fullName>
        <shortName evidence="1">DHBP synthase</shortName>
        <ecNumber evidence="1">4.1.99.12</ecNumber>
    </recommendedName>
</protein>
<evidence type="ECO:0000255" key="1">
    <source>
        <dbReference type="HAMAP-Rule" id="MF_00180"/>
    </source>
</evidence>